<dbReference type="SMR" id="P84881"/>
<dbReference type="iPTMnet" id="P84881"/>
<dbReference type="GO" id="GO:0004867">
    <property type="term" value="F:serine-type endopeptidase inhibitor activity"/>
    <property type="evidence" value="ECO:0000314"/>
    <property type="project" value="UniProtKB"/>
</dbReference>
<dbReference type="Gene3D" id="2.80.10.50">
    <property type="match status" value="1"/>
</dbReference>
<dbReference type="InterPro" id="IPR011065">
    <property type="entry name" value="Kunitz_inhibitor_STI-like_sf"/>
</dbReference>
<dbReference type="InterPro" id="IPR002160">
    <property type="entry name" value="Prot_inh_Kunz-lg"/>
</dbReference>
<dbReference type="PANTHER" id="PTHR33107:SF21">
    <property type="entry name" value="KUNITZ FAMILY TRYPSIN AND PROTEASE INHIBITOR PROTEIN"/>
    <property type="match status" value="1"/>
</dbReference>
<dbReference type="PANTHER" id="PTHR33107">
    <property type="entry name" value="KUNITZ TRYPSIN INHIBITOR 2"/>
    <property type="match status" value="1"/>
</dbReference>
<dbReference type="Pfam" id="PF00197">
    <property type="entry name" value="Kunitz_legume"/>
    <property type="match status" value="1"/>
</dbReference>
<dbReference type="PRINTS" id="PR00291">
    <property type="entry name" value="KUNITZINHBTR"/>
</dbReference>
<dbReference type="SMART" id="SM00452">
    <property type="entry name" value="STI"/>
    <property type="match status" value="1"/>
</dbReference>
<dbReference type="SUPFAM" id="SSF50386">
    <property type="entry name" value="STI-like"/>
    <property type="match status" value="1"/>
</dbReference>
<dbReference type="PROSITE" id="PS00283">
    <property type="entry name" value="SOYBEAN_KUNITZ"/>
    <property type="match status" value="1"/>
</dbReference>
<evidence type="ECO:0000255" key="1"/>
<evidence type="ECO:0000269" key="2">
    <source>
    </source>
</evidence>
<evidence type="ECO:0000305" key="3"/>
<accession>P84881</accession>
<keyword id="KW-0903">Direct protein sequencing</keyword>
<keyword id="KW-1015">Disulfide bond</keyword>
<keyword id="KW-0325">Glycoprotein</keyword>
<keyword id="KW-0646">Protease inhibitor</keyword>
<keyword id="KW-0722">Serine protease inhibitor</keyword>
<comment type="function">
    <text evidence="2">Inhibitor of porcine pancreatic elastase with a Ki of 27 nM. Does not inhibit human neutrophil elastase, bovine trypsin, human plasma kallikrein or porcine pancreatic kallikrein.</text>
</comment>
<comment type="miscellaneous">
    <text evidence="2">On the 2D-gel the determined pI of this protein is: 4.56, its MW is: 16992.79 kDa.</text>
</comment>
<comment type="similarity">
    <text evidence="1">Belongs to the leguminous Kunitz-type inhibitor family.</text>
</comment>
<reference evidence="3" key="1">
    <citation type="journal article" date="2006" name="Planta Med.">
        <title>A Kunitz-type glycosylated elastase inhibitor with one disulfide bridge.</title>
        <authorList>
            <person name="Sumikawa J.T."/>
            <person name="Nakahata A.M."/>
            <person name="Fritz H."/>
            <person name="Mentele R."/>
            <person name="Sampaio M.U."/>
            <person name="Oliva M.L."/>
        </authorList>
    </citation>
    <scope>PROTEIN SEQUENCE</scope>
    <scope>FUNCTION</scope>
    <scope>GLYCOSYLATION AT ASN-38</scope>
    <scope>DISULFIDE BOND</scope>
    <source>
        <tissue evidence="2">Seed</tissue>
    </source>
</reference>
<organism>
    <name type="scientific">Bauhinia rufa</name>
    <name type="common">Orchid tree</name>
    <name type="synonym">Pauletia rufa</name>
    <dbReference type="NCBI Taxonomy" id="390785"/>
    <lineage>
        <taxon>Eukaryota</taxon>
        <taxon>Viridiplantae</taxon>
        <taxon>Streptophyta</taxon>
        <taxon>Embryophyta</taxon>
        <taxon>Tracheophyta</taxon>
        <taxon>Spermatophyta</taxon>
        <taxon>Magnoliopsida</taxon>
        <taxon>eudicotyledons</taxon>
        <taxon>Gunneridae</taxon>
        <taxon>Pentapetalae</taxon>
        <taxon>rosids</taxon>
        <taxon>fabids</taxon>
        <taxon>Fabales</taxon>
        <taxon>Fabaceae</taxon>
        <taxon>Cercidoideae</taxon>
        <taxon>Cercideae</taxon>
        <taxon>Bauhiniinae</taxon>
        <taxon>Bauhinia</taxon>
    </lineage>
</organism>
<protein>
    <recommendedName>
        <fullName>Kunitz-type elastase inhibitor BrEI</fullName>
    </recommendedName>
</protein>
<sequence length="144" mass="15823">ASPVLDANGDPLVPGGQYYVLPHIWPGPGGLSFEKTGNQTCPVSVFQLPRLPLEQNNGKPLVFTPVSETDDINEDTAVEIAFAEPPSCAESGKWLIVNDFKEEYWSVGIGGPQDHEGYQTLTGYFKIHKVGSFAYMFSFLPFVR</sequence>
<feature type="chain" id="PRO_0000245796" description="Kunitz-type elastase inhibitor BrEI">
    <location>
        <begin position="1"/>
        <end position="144"/>
    </location>
</feature>
<feature type="site" description="Reactive bond for elastase" evidence="2">
    <location>
        <begin position="66"/>
        <end position="67"/>
    </location>
</feature>
<feature type="glycosylation site" description="N-linked (GlcNAc...) asparagine" evidence="2">
    <location>
        <position position="38"/>
    </location>
</feature>
<feature type="disulfide bond" evidence="2">
    <location>
        <begin position="41"/>
        <end position="88"/>
    </location>
</feature>
<name>IELK1_BAURF</name>
<proteinExistence type="evidence at protein level"/>